<comment type="function">
    <text evidence="1">Catalyzes the formation of the alpha-1,6-glucosidic linkages in glycogen by scission of a 1,4-alpha-linked oligosaccharide from growing alpha-1,4-glucan chains and the subsequent attachment of the oligosaccharide to the alpha-1,6 position.</text>
</comment>
<comment type="catalytic activity">
    <reaction evidence="1">
        <text>Transfers a segment of a (1-&gt;4)-alpha-D-glucan chain to a primary hydroxy group in a similar glucan chain.</text>
        <dbReference type="EC" id="2.4.1.18"/>
    </reaction>
</comment>
<comment type="pathway">
    <text evidence="1">Glycan biosynthesis; glycogen biosynthesis.</text>
</comment>
<comment type="subunit">
    <text evidence="1">Monomer.</text>
</comment>
<comment type="similarity">
    <text evidence="1">Belongs to the glycosyl hydrolase 13 family. GlgB subfamily.</text>
</comment>
<accession>Q2YB47</accession>
<dbReference type="EC" id="2.4.1.18" evidence="1"/>
<dbReference type="EMBL" id="CP000103">
    <property type="protein sequence ID" value="ABB74024.1"/>
    <property type="molecule type" value="Genomic_DNA"/>
</dbReference>
<dbReference type="RefSeq" id="WP_011380074.1">
    <property type="nucleotide sequence ID" value="NC_007614.1"/>
</dbReference>
<dbReference type="SMR" id="Q2YB47"/>
<dbReference type="STRING" id="323848.Nmul_A0717"/>
<dbReference type="CAZy" id="CBM48">
    <property type="family name" value="Carbohydrate-Binding Module Family 48"/>
</dbReference>
<dbReference type="CAZy" id="GH13">
    <property type="family name" value="Glycoside Hydrolase Family 13"/>
</dbReference>
<dbReference type="KEGG" id="nmu:Nmul_A0717"/>
<dbReference type="eggNOG" id="COG0296">
    <property type="taxonomic scope" value="Bacteria"/>
</dbReference>
<dbReference type="HOGENOM" id="CLU_004245_3_2_4"/>
<dbReference type="OrthoDB" id="9800174at2"/>
<dbReference type="UniPathway" id="UPA00164"/>
<dbReference type="Proteomes" id="UP000002718">
    <property type="component" value="Chromosome"/>
</dbReference>
<dbReference type="GO" id="GO:0005829">
    <property type="term" value="C:cytosol"/>
    <property type="evidence" value="ECO:0007669"/>
    <property type="project" value="TreeGrafter"/>
</dbReference>
<dbReference type="GO" id="GO:0003844">
    <property type="term" value="F:1,4-alpha-glucan branching enzyme activity"/>
    <property type="evidence" value="ECO:0007669"/>
    <property type="project" value="UniProtKB-UniRule"/>
</dbReference>
<dbReference type="GO" id="GO:0043169">
    <property type="term" value="F:cation binding"/>
    <property type="evidence" value="ECO:0007669"/>
    <property type="project" value="InterPro"/>
</dbReference>
<dbReference type="GO" id="GO:0004553">
    <property type="term" value="F:hydrolase activity, hydrolyzing O-glycosyl compounds"/>
    <property type="evidence" value="ECO:0007669"/>
    <property type="project" value="InterPro"/>
</dbReference>
<dbReference type="GO" id="GO:0005978">
    <property type="term" value="P:glycogen biosynthetic process"/>
    <property type="evidence" value="ECO:0007669"/>
    <property type="project" value="UniProtKB-UniRule"/>
</dbReference>
<dbReference type="CDD" id="cd11322">
    <property type="entry name" value="AmyAc_Glg_BE"/>
    <property type="match status" value="1"/>
</dbReference>
<dbReference type="CDD" id="cd02855">
    <property type="entry name" value="E_set_GBE_prok_N"/>
    <property type="match status" value="1"/>
</dbReference>
<dbReference type="FunFam" id="2.60.40.10:FF:000169">
    <property type="entry name" value="1,4-alpha-glucan branching enzyme GlgB"/>
    <property type="match status" value="1"/>
</dbReference>
<dbReference type="FunFam" id="2.60.40.1180:FF:000002">
    <property type="entry name" value="1,4-alpha-glucan branching enzyme GlgB"/>
    <property type="match status" value="1"/>
</dbReference>
<dbReference type="FunFam" id="3.20.20.80:FF:000003">
    <property type="entry name" value="1,4-alpha-glucan branching enzyme GlgB"/>
    <property type="match status" value="1"/>
</dbReference>
<dbReference type="Gene3D" id="3.20.20.80">
    <property type="entry name" value="Glycosidases"/>
    <property type="match status" value="1"/>
</dbReference>
<dbReference type="Gene3D" id="2.60.40.1180">
    <property type="entry name" value="Golgi alpha-mannosidase II"/>
    <property type="match status" value="1"/>
</dbReference>
<dbReference type="Gene3D" id="2.60.40.10">
    <property type="entry name" value="Immunoglobulins"/>
    <property type="match status" value="1"/>
</dbReference>
<dbReference type="HAMAP" id="MF_00685">
    <property type="entry name" value="GlgB"/>
    <property type="match status" value="1"/>
</dbReference>
<dbReference type="InterPro" id="IPR006048">
    <property type="entry name" value="A-amylase/branching_C"/>
</dbReference>
<dbReference type="InterPro" id="IPR037439">
    <property type="entry name" value="Branching_enzy"/>
</dbReference>
<dbReference type="InterPro" id="IPR006407">
    <property type="entry name" value="GlgB"/>
</dbReference>
<dbReference type="InterPro" id="IPR054169">
    <property type="entry name" value="GlgB_N"/>
</dbReference>
<dbReference type="InterPro" id="IPR044143">
    <property type="entry name" value="GlgB_N_E_set_prok"/>
</dbReference>
<dbReference type="InterPro" id="IPR006047">
    <property type="entry name" value="Glyco_hydro_13_cat_dom"/>
</dbReference>
<dbReference type="InterPro" id="IPR004193">
    <property type="entry name" value="Glyco_hydro_13_N"/>
</dbReference>
<dbReference type="InterPro" id="IPR013780">
    <property type="entry name" value="Glyco_hydro_b"/>
</dbReference>
<dbReference type="InterPro" id="IPR017853">
    <property type="entry name" value="Glycoside_hydrolase_SF"/>
</dbReference>
<dbReference type="InterPro" id="IPR013783">
    <property type="entry name" value="Ig-like_fold"/>
</dbReference>
<dbReference type="InterPro" id="IPR014756">
    <property type="entry name" value="Ig_E-set"/>
</dbReference>
<dbReference type="NCBIfam" id="TIGR01515">
    <property type="entry name" value="branching_enzym"/>
    <property type="match status" value="1"/>
</dbReference>
<dbReference type="NCBIfam" id="NF003811">
    <property type="entry name" value="PRK05402.1"/>
    <property type="match status" value="1"/>
</dbReference>
<dbReference type="NCBIfam" id="NF008967">
    <property type="entry name" value="PRK12313.1"/>
    <property type="match status" value="1"/>
</dbReference>
<dbReference type="PANTHER" id="PTHR43651">
    <property type="entry name" value="1,4-ALPHA-GLUCAN-BRANCHING ENZYME"/>
    <property type="match status" value="1"/>
</dbReference>
<dbReference type="PANTHER" id="PTHR43651:SF3">
    <property type="entry name" value="1,4-ALPHA-GLUCAN-BRANCHING ENZYME"/>
    <property type="match status" value="1"/>
</dbReference>
<dbReference type="Pfam" id="PF00128">
    <property type="entry name" value="Alpha-amylase"/>
    <property type="match status" value="1"/>
</dbReference>
<dbReference type="Pfam" id="PF02806">
    <property type="entry name" value="Alpha-amylase_C"/>
    <property type="match status" value="1"/>
</dbReference>
<dbReference type="Pfam" id="PF02922">
    <property type="entry name" value="CBM_48"/>
    <property type="match status" value="1"/>
</dbReference>
<dbReference type="Pfam" id="PF22019">
    <property type="entry name" value="GlgB_N"/>
    <property type="match status" value="1"/>
</dbReference>
<dbReference type="PIRSF" id="PIRSF000463">
    <property type="entry name" value="GlgB"/>
    <property type="match status" value="1"/>
</dbReference>
<dbReference type="SMART" id="SM00642">
    <property type="entry name" value="Aamy"/>
    <property type="match status" value="1"/>
</dbReference>
<dbReference type="SUPFAM" id="SSF51445">
    <property type="entry name" value="(Trans)glycosidases"/>
    <property type="match status" value="1"/>
</dbReference>
<dbReference type="SUPFAM" id="SSF81296">
    <property type="entry name" value="E set domains"/>
    <property type="match status" value="2"/>
</dbReference>
<dbReference type="SUPFAM" id="SSF51011">
    <property type="entry name" value="Glycosyl hydrolase domain"/>
    <property type="match status" value="1"/>
</dbReference>
<keyword id="KW-0119">Carbohydrate metabolism</keyword>
<keyword id="KW-0320">Glycogen biosynthesis</keyword>
<keyword id="KW-0321">Glycogen metabolism</keyword>
<keyword id="KW-0328">Glycosyltransferase</keyword>
<keyword id="KW-1185">Reference proteome</keyword>
<keyword id="KW-0808">Transferase</keyword>
<name>GLGB_NITMU</name>
<feature type="chain" id="PRO_0000260672" description="1,4-alpha-glucan branching enzyme GlgB">
    <location>
        <begin position="1"/>
        <end position="746"/>
    </location>
</feature>
<feature type="active site" description="Nucleophile" evidence="1">
    <location>
        <position position="418"/>
    </location>
</feature>
<feature type="active site" description="Proton donor" evidence="1">
    <location>
        <position position="471"/>
    </location>
</feature>
<proteinExistence type="inferred from homology"/>
<evidence type="ECO:0000255" key="1">
    <source>
        <dbReference type="HAMAP-Rule" id="MF_00685"/>
    </source>
</evidence>
<protein>
    <recommendedName>
        <fullName evidence="1">1,4-alpha-glucan branching enzyme GlgB</fullName>
        <ecNumber evidence="1">2.4.1.18</ecNumber>
    </recommendedName>
    <alternativeName>
        <fullName evidence="1">1,4-alpha-D-glucan:1,4-alpha-D-glucan 6-glucosyl-transferase</fullName>
    </alternativeName>
    <alternativeName>
        <fullName evidence="1">Alpha-(1-&gt;4)-glucan branching enzyme</fullName>
    </alternativeName>
    <alternativeName>
        <fullName evidence="1">Glycogen branching enzyme</fullName>
        <shortName evidence="1">BE</shortName>
    </alternativeName>
</protein>
<sequence length="746" mass="85379">MRAYPTIQRPSIKRDPRLHALLAGRLHDPFSFLGPHVEHGHWVVRAFHPHAASIWINTDDGFESMTRAHPAGVFEWWGLIPLPLPYQLRIEEASFEAPAHVYDIYDAYAFPPQVSEHDLYLFNEGRLHQAYRMLGSHLVEMEGVAGVRFSVWAPNAERVSVVGSFNRWDGRIHPMVSHGASGVWELFIPGVPTDSFYKYEIRNRDTGAILLKTDPYARHYEVRPGTAARAPSASRMTWGDARWMAQRAVWDWLATPLNIYEVHAGSWKRHANGSFYSYRELADHLLPYVREMGYTHIELLPISEHPLDESWGYQTTGYFAATSRYGTSDDLKFFINACHQEGIGVILDWVPAHFPQDAFALARFDGSALYEHEDPRMGLHQDWGTHIFNYGRNEVKSFLLSSAHYWLSEFHLDGLRVDAVASMLYLDYSRLPGEWLPNRYGGRENLEAIDFLRELNIMVHQEFPGALTLAEESTAWPGVSRPTYVGGLGFSMKWNMGWMNDTLVYMRNDPVYRRFHHEQLTFGQLYAYSENFVLPFSHDEVVHGKGSLLGKMPGDAWQQFANLRLLFTYQMTYPGKKLNFMGNEFAQGREWNSSRELDWYQLGDGWHEGVKMAARDLNQLYSAVAALHQRDFEPEGFSWVDCHDADNSVISYLRFARNGSFALVVLNFTPVPRYRYRIGVPTSGSYQEIFNSDSRYYGGSDLGNMGSIRTTGQPSMERMDSIVITLPPLAGLIFVHTDLPAINTDG</sequence>
<organism>
    <name type="scientific">Nitrosospira multiformis (strain ATCC 25196 / NCIMB 11849 / C 71)</name>
    <dbReference type="NCBI Taxonomy" id="323848"/>
    <lineage>
        <taxon>Bacteria</taxon>
        <taxon>Pseudomonadati</taxon>
        <taxon>Pseudomonadota</taxon>
        <taxon>Betaproteobacteria</taxon>
        <taxon>Nitrosomonadales</taxon>
        <taxon>Nitrosomonadaceae</taxon>
        <taxon>Nitrosospira</taxon>
    </lineage>
</organism>
<gene>
    <name evidence="1" type="primary">glgB</name>
    <name type="ordered locus">Nmul_A0717</name>
</gene>
<reference key="1">
    <citation type="submission" date="2005-08" db="EMBL/GenBank/DDBJ databases">
        <title>Complete sequence of chromosome 1 of Nitrosospira multiformis ATCC 25196.</title>
        <authorList>
            <person name="Copeland A."/>
            <person name="Lucas S."/>
            <person name="Lapidus A."/>
            <person name="Barry K."/>
            <person name="Detter J.C."/>
            <person name="Glavina T."/>
            <person name="Hammon N."/>
            <person name="Israni S."/>
            <person name="Pitluck S."/>
            <person name="Chain P."/>
            <person name="Malfatti S."/>
            <person name="Shin M."/>
            <person name="Vergez L."/>
            <person name="Schmutz J."/>
            <person name="Larimer F."/>
            <person name="Land M."/>
            <person name="Hauser L."/>
            <person name="Kyrpides N."/>
            <person name="Lykidis A."/>
            <person name="Richardson P."/>
        </authorList>
    </citation>
    <scope>NUCLEOTIDE SEQUENCE [LARGE SCALE GENOMIC DNA]</scope>
    <source>
        <strain>ATCC 25196 / NCIMB 11849 / C 71</strain>
    </source>
</reference>